<reference key="1">
    <citation type="journal article" date="1991" name="Proc. Natl. Acad. Sci. U.S.A.">
        <title>Cloning of a cellular factor, interleukin binding factor, that binds to NFAT-like motifs in the human immunodeficiency virus long terminal repeat.</title>
        <authorList>
            <person name="Li C."/>
            <person name="Lai C."/>
            <person name="Sigman D.S."/>
            <person name="Gaynor R.B."/>
        </authorList>
    </citation>
    <scope>NUCLEOTIDE SEQUENCE [MRNA] (ISOFORM 1)</scope>
    <scope>FUNCTION</scope>
    <source>
        <tissue>Cervix carcinoma</tissue>
    </source>
</reference>
<reference key="2">
    <citation type="journal article" date="1992" name="Genomics">
        <title>Characterization and chromosomal mapping of the gene encoding the cellular DNA binding protein ILF.</title>
        <authorList>
            <person name="Li C."/>
            <person name="Lusis A.J."/>
            <person name="Sparkes R."/>
            <person name="Nirula A."/>
            <person name="Gaynor R.B."/>
        </authorList>
    </citation>
    <scope>NUCLEOTIDE SEQUENCE [MRNA] (ISOFORMS 1 AND 2)</scope>
    <scope>FUNCTION</scope>
    <scope>TISSUE SPECIFICITY</scope>
    <source>
        <tissue>Cervix carcinoma</tissue>
        <tissue>Lymphoid tissue</tissue>
    </source>
</reference>
<reference key="3">
    <citation type="submission" date="1996-05" db="EMBL/GenBank/DDBJ databases">
        <authorList>
            <person name="Nirula A."/>
            <person name="Moore D.J."/>
            <person name="Li C."/>
            <person name="Gaynor R.B."/>
        </authorList>
    </citation>
    <scope>SEQUENCE REVISION (ISOFORMS 1; 2 AND 3)</scope>
</reference>
<reference key="4">
    <citation type="journal article" date="2006" name="Nature">
        <title>DNA sequence of human chromosome 17 and analysis of rearrangement in the human lineage.</title>
        <authorList>
            <person name="Zody M.C."/>
            <person name="Garber M."/>
            <person name="Adams D.J."/>
            <person name="Sharpe T."/>
            <person name="Harrow J."/>
            <person name="Lupski J.R."/>
            <person name="Nicholson C."/>
            <person name="Searle S.M."/>
            <person name="Wilming L."/>
            <person name="Young S.K."/>
            <person name="Abouelleil A."/>
            <person name="Allen N.R."/>
            <person name="Bi W."/>
            <person name="Bloom T."/>
            <person name="Borowsky M.L."/>
            <person name="Bugalter B.E."/>
            <person name="Butler J."/>
            <person name="Chang J.L."/>
            <person name="Chen C.-K."/>
            <person name="Cook A."/>
            <person name="Corum B."/>
            <person name="Cuomo C.A."/>
            <person name="de Jong P.J."/>
            <person name="DeCaprio D."/>
            <person name="Dewar K."/>
            <person name="FitzGerald M."/>
            <person name="Gilbert J."/>
            <person name="Gibson R."/>
            <person name="Gnerre S."/>
            <person name="Goldstein S."/>
            <person name="Grafham D.V."/>
            <person name="Grocock R."/>
            <person name="Hafez N."/>
            <person name="Hagopian D.S."/>
            <person name="Hart E."/>
            <person name="Norman C.H."/>
            <person name="Humphray S."/>
            <person name="Jaffe D.B."/>
            <person name="Jones M."/>
            <person name="Kamal M."/>
            <person name="Khodiyar V.K."/>
            <person name="LaButti K."/>
            <person name="Laird G."/>
            <person name="Lehoczky J."/>
            <person name="Liu X."/>
            <person name="Lokyitsang T."/>
            <person name="Loveland J."/>
            <person name="Lui A."/>
            <person name="Macdonald P."/>
            <person name="Major J.E."/>
            <person name="Matthews L."/>
            <person name="Mauceli E."/>
            <person name="McCarroll S.A."/>
            <person name="Mihalev A.H."/>
            <person name="Mudge J."/>
            <person name="Nguyen C."/>
            <person name="Nicol R."/>
            <person name="O'Leary S.B."/>
            <person name="Osoegawa K."/>
            <person name="Schwartz D.C."/>
            <person name="Shaw-Smith C."/>
            <person name="Stankiewicz P."/>
            <person name="Steward C."/>
            <person name="Swarbreck D."/>
            <person name="Venkataraman V."/>
            <person name="Whittaker C.A."/>
            <person name="Yang X."/>
            <person name="Zimmer A.R."/>
            <person name="Bradley A."/>
            <person name="Hubbard T."/>
            <person name="Birren B.W."/>
            <person name="Rogers J."/>
            <person name="Lander E.S."/>
            <person name="Nusbaum C."/>
        </authorList>
    </citation>
    <scope>NUCLEOTIDE SEQUENCE [LARGE SCALE GENOMIC DNA]</scope>
</reference>
<reference key="5">
    <citation type="journal article" date="2007" name="Science">
        <title>ATM and ATR substrate analysis reveals extensive protein networks responsive to DNA damage.</title>
        <authorList>
            <person name="Matsuoka S."/>
            <person name="Ballif B.A."/>
            <person name="Smogorzewska A."/>
            <person name="McDonald E.R. III"/>
            <person name="Hurov K.E."/>
            <person name="Luo J."/>
            <person name="Bakalarski C.E."/>
            <person name="Zhao Z."/>
            <person name="Solimini N."/>
            <person name="Lerenthal Y."/>
            <person name="Shiloh Y."/>
            <person name="Gygi S.P."/>
            <person name="Elledge S.J."/>
        </authorList>
    </citation>
    <scope>PHOSPHORYLATION [LARGE SCALE ANALYSIS] AT SER-239</scope>
    <scope>IDENTIFICATION BY MASS SPECTROMETRY [LARGE SCALE ANALYSIS]</scope>
    <source>
        <tissue>Embryonic kidney</tissue>
    </source>
</reference>
<reference key="6">
    <citation type="journal article" date="2008" name="J. Proteome Res.">
        <title>Combining protein-based IMAC, peptide-based IMAC, and MudPIT for efficient phosphoproteomic analysis.</title>
        <authorList>
            <person name="Cantin G.T."/>
            <person name="Yi W."/>
            <person name="Lu B."/>
            <person name="Park S.K."/>
            <person name="Xu T."/>
            <person name="Lee J.-D."/>
            <person name="Yates J.R. III"/>
        </authorList>
    </citation>
    <scope>PHOSPHORYLATION [LARGE SCALE ANALYSIS] AT SER-428</scope>
    <scope>IDENTIFICATION BY MASS SPECTROMETRY [LARGE SCALE ANALYSIS]</scope>
    <source>
        <tissue>Cervix carcinoma</tissue>
    </source>
</reference>
<reference key="7">
    <citation type="journal article" date="2008" name="Proc. Natl. Acad. Sci. U.S.A.">
        <title>A quantitative atlas of mitotic phosphorylation.</title>
        <authorList>
            <person name="Dephoure N."/>
            <person name="Zhou C."/>
            <person name="Villen J."/>
            <person name="Beausoleil S.A."/>
            <person name="Bakalarski C.E."/>
            <person name="Elledge S.J."/>
            <person name="Gygi S.P."/>
        </authorList>
    </citation>
    <scope>IDENTIFICATION BY MASS SPECTROMETRY [LARGE SCALE ANALYSIS]</scope>
    <source>
        <tissue>Cervix carcinoma</tissue>
    </source>
</reference>
<reference key="8">
    <citation type="journal article" date="2009" name="Anal. Chem.">
        <title>Lys-N and trypsin cover complementary parts of the phosphoproteome in a refined SCX-based approach.</title>
        <authorList>
            <person name="Gauci S."/>
            <person name="Helbig A.O."/>
            <person name="Slijper M."/>
            <person name="Krijgsveld J."/>
            <person name="Heck A.J."/>
            <person name="Mohammed S."/>
        </authorList>
    </citation>
    <scope>ACETYLATION [LARGE SCALE ANALYSIS] AT ALA-2</scope>
    <scope>CLEAVAGE OF INITIATOR METHIONINE [LARGE SCALE ANALYSIS]</scope>
    <scope>IDENTIFICATION BY MASS SPECTROMETRY [LARGE SCALE ANALYSIS]</scope>
</reference>
<reference key="9">
    <citation type="journal article" date="2009" name="Sci. Signal.">
        <title>Quantitative phosphoproteomic analysis of T cell receptor signaling reveals system-wide modulation of protein-protein interactions.</title>
        <authorList>
            <person name="Mayya V."/>
            <person name="Lundgren D.H."/>
            <person name="Hwang S.-I."/>
            <person name="Rezaul K."/>
            <person name="Wu L."/>
            <person name="Eng J.K."/>
            <person name="Rodionov V."/>
            <person name="Han D.K."/>
        </authorList>
    </citation>
    <scope>PHOSPHORYLATION [LARGE SCALE ANALYSIS] AT SER-398 AND SER-428</scope>
    <scope>IDENTIFICATION BY MASS SPECTROMETRY [LARGE SCALE ANALYSIS]</scope>
    <source>
        <tissue>Leukemic T-cell</tissue>
    </source>
</reference>
<reference key="10">
    <citation type="journal article" date="2010" name="J. Biochem.">
        <title>FOXK2 transcription factor is a novel G/T-mismatch DNA binding protein.</title>
        <authorList>
            <person name="Fujii Y."/>
            <person name="Nakamura M."/>
        </authorList>
    </citation>
    <scope>FUNCTION</scope>
    <scope>DNA-BINDING</scope>
</reference>
<reference key="11">
    <citation type="journal article" date="2010" name="J. Biol. Chem.">
        <title>Cell cycle-dependent regulation of the forkhead transcription factor FOXK2 by CDK.cyclin complexes.</title>
        <authorList>
            <person name="Marais A."/>
            <person name="Ji Z."/>
            <person name="Child E.S."/>
            <person name="Krause E."/>
            <person name="Mann D.J."/>
            <person name="Sharrocks A.D."/>
        </authorList>
    </citation>
    <scope>SUBCELLULAR LOCATION</scope>
    <scope>PHOSPHORYLATION AT SER-373 AND SER-428</scope>
    <scope>MUTAGENESIS OF SER-373 AND SER-428</scope>
</reference>
<reference key="12">
    <citation type="journal article" date="2010" name="Sci. Signal.">
        <title>Quantitative phosphoproteomics reveals widespread full phosphorylation site occupancy during mitosis.</title>
        <authorList>
            <person name="Olsen J.V."/>
            <person name="Vermeulen M."/>
            <person name="Santamaria A."/>
            <person name="Kumar C."/>
            <person name="Miller M.L."/>
            <person name="Jensen L.J."/>
            <person name="Gnad F."/>
            <person name="Cox J."/>
            <person name="Jensen T.S."/>
            <person name="Nigg E.A."/>
            <person name="Brunak S."/>
            <person name="Mann M."/>
        </authorList>
    </citation>
    <scope>ACETYLATION [LARGE SCALE ANALYSIS] AT ALA-2</scope>
    <scope>PHOSPHORYLATION [LARGE SCALE ANALYSIS] AT SER-30; SER-398; SER-424 AND SER-428</scope>
    <scope>CLEAVAGE OF INITIATOR METHIONINE [LARGE SCALE ANALYSIS]</scope>
    <scope>IDENTIFICATION BY MASS SPECTROMETRY [LARGE SCALE ANALYSIS]</scope>
    <source>
        <tissue>Cervix carcinoma</tissue>
    </source>
</reference>
<reference key="13">
    <citation type="journal article" date="2012" name="Mol. Cell. Biol.">
        <title>The forkhead transcription factor FOXK2 promotes AP-1-mediated transcriptional regulation.</title>
        <authorList>
            <person name="Ji Z."/>
            <person name="Donaldson I.J."/>
            <person name="Liu J."/>
            <person name="Hayes A."/>
            <person name="Zeef L.A."/>
            <person name="Sharrocks A.D."/>
        </authorList>
    </citation>
    <scope>FUNCTION</scope>
    <scope>DNA-BINDING</scope>
</reference>
<reference key="14">
    <citation type="journal article" date="2011" name="Sci. Signal.">
        <title>System-wide temporal characterization of the proteome and phosphoproteome of human embryonic stem cell differentiation.</title>
        <authorList>
            <person name="Rigbolt K.T."/>
            <person name="Prokhorova T.A."/>
            <person name="Akimov V."/>
            <person name="Henningsen J."/>
            <person name="Johansen P.T."/>
            <person name="Kratchmarova I."/>
            <person name="Kassem M."/>
            <person name="Mann M."/>
            <person name="Olsen J.V."/>
            <person name="Blagoev B."/>
        </authorList>
    </citation>
    <scope>PHOSPHORYLATION [LARGE SCALE ANALYSIS] AT SER-398</scope>
    <scope>IDENTIFICATION BY MASS SPECTROMETRY [LARGE SCALE ANALYSIS]</scope>
</reference>
<reference key="15">
    <citation type="journal article" date="2013" name="J. Proteome Res.">
        <title>Toward a comprehensive characterization of a human cancer cell phosphoproteome.</title>
        <authorList>
            <person name="Zhou H."/>
            <person name="Di Palma S."/>
            <person name="Preisinger C."/>
            <person name="Peng M."/>
            <person name="Polat A.N."/>
            <person name="Heck A.J."/>
            <person name="Mohammed S."/>
        </authorList>
    </citation>
    <scope>PHOSPHORYLATION [LARGE SCALE ANALYSIS] AT SER-239; SER-398; SER-424 AND SER-428</scope>
    <scope>IDENTIFICATION BY MASS SPECTROMETRY [LARGE SCALE ANALYSIS]</scope>
    <source>
        <tissue>Cervix carcinoma</tissue>
        <tissue>Erythroleukemia</tissue>
    </source>
</reference>
<reference key="16">
    <citation type="journal article" date="2014" name="J. Proteomics">
        <title>An enzyme assisted RP-RPLC approach for in-depth analysis of human liver phosphoproteome.</title>
        <authorList>
            <person name="Bian Y."/>
            <person name="Song C."/>
            <person name="Cheng K."/>
            <person name="Dong M."/>
            <person name="Wang F."/>
            <person name="Huang J."/>
            <person name="Sun D."/>
            <person name="Wang L."/>
            <person name="Ye M."/>
            <person name="Zou H."/>
        </authorList>
    </citation>
    <scope>PHOSPHORYLATION [LARGE SCALE ANALYSIS] AT SER-398</scope>
    <scope>IDENTIFICATION BY MASS SPECTROMETRY [LARGE SCALE ANALYSIS]</scope>
    <source>
        <tissue>Liver</tissue>
    </source>
</reference>
<reference key="17">
    <citation type="journal article" date="2014" name="Mol. Cell. Proteomics">
        <title>Immunoaffinity enrichment and mass spectrometry analysis of protein methylation.</title>
        <authorList>
            <person name="Guo A."/>
            <person name="Gu H."/>
            <person name="Zhou J."/>
            <person name="Mulhern D."/>
            <person name="Wang Y."/>
            <person name="Lee K.A."/>
            <person name="Yang V."/>
            <person name="Aguiar M."/>
            <person name="Kornhauser J."/>
            <person name="Jia X."/>
            <person name="Ren J."/>
            <person name="Beausoleil S.A."/>
            <person name="Silva J.C."/>
            <person name="Vemulapalli V."/>
            <person name="Bedford M.T."/>
            <person name="Comb M.J."/>
        </authorList>
    </citation>
    <scope>METHYLATION [LARGE SCALE ANALYSIS] AT ARG-144</scope>
    <scope>IDENTIFICATION BY MASS SPECTROMETRY [LARGE SCALE ANALYSIS]</scope>
    <source>
        <tissue>Colon carcinoma</tissue>
    </source>
</reference>
<reference key="18">
    <citation type="journal article" date="2014" name="Nat. Struct. Mol. Biol.">
        <title>Uncovering global SUMOylation signaling networks in a site-specific manner.</title>
        <authorList>
            <person name="Hendriks I.A."/>
            <person name="D'Souza R.C."/>
            <person name="Yang B."/>
            <person name="Verlaan-de Vries M."/>
            <person name="Mann M."/>
            <person name="Vertegaal A.C."/>
        </authorList>
    </citation>
    <scope>SUMOYLATION [LARGE SCALE ANALYSIS] AT LYS-527</scope>
    <scope>IDENTIFICATION BY MASS SPECTROMETRY [LARGE SCALE ANALYSIS]</scope>
</reference>
<reference key="19">
    <citation type="journal article" date="2014" name="Nucleic Acids Res.">
        <title>The forkhead transcription factor FOXK2 acts as a chromatin targeting factor for the BAP1-containing histone deubiquitinase complex.</title>
        <authorList>
            <person name="Ji Z."/>
            <person name="Mohammed H."/>
            <person name="Webber A."/>
            <person name="Ridsdale J."/>
            <person name="Han N."/>
            <person name="Carroll J.S."/>
            <person name="Sharrocks A.D."/>
        </authorList>
    </citation>
    <scope>INTERACTION WITH BAP1</scope>
    <scope>SUBCELLULAR LOCATION</scope>
    <scope>MUTAGENESIS OF ARG-58</scope>
</reference>
<reference key="20">
    <citation type="journal article" date="2014" name="Proteomics">
        <title>MBD5 and MBD6 interact with the human PR-DUB complex through their methyl-CpG-binding domain.</title>
        <authorList>
            <person name="Baymaz H.I."/>
            <person name="Fournier A."/>
            <person name="Laget S."/>
            <person name="Ji Z."/>
            <person name="Jansen P.W."/>
            <person name="Smits A.H."/>
            <person name="Ferry L."/>
            <person name="Mensinga A."/>
            <person name="Poser I."/>
            <person name="Sharrocks A."/>
            <person name="Defossez P.A."/>
            <person name="Vermeulen M."/>
        </authorList>
    </citation>
    <scope>FUNCTION</scope>
    <scope>IDENTIFICATION IN THE PR-DUB COMPLEX</scope>
    <scope>IDENTIFICATION BY MASS SPECTROMETRY</scope>
</reference>
<reference key="21">
    <citation type="journal article" date="2015" name="Dev. Cell">
        <title>FOXKs promote Wnt/beta-catenin signaling by translocating DVL into the nucleus.</title>
        <authorList>
            <person name="Wang W."/>
            <person name="Li X."/>
            <person name="Lee M."/>
            <person name="Jun S."/>
            <person name="Aziz K.E."/>
            <person name="Feng L."/>
            <person name="Tran M.K."/>
            <person name="Li N."/>
            <person name="McCrea P.D."/>
            <person name="Park J.I."/>
            <person name="Chen J."/>
        </authorList>
    </citation>
    <scope>FUNCTION</scope>
    <scope>INTERACTION WITH DVL1; DVL2; DVL3 AND SUDS3</scope>
    <scope>SUBCELLULAR LOCATION</scope>
    <scope>MUTAGENESIS OF ARG-129; ARG-130; GLY-131; PRO-133; GLN-136; LEU-137; PRO-138; CYS-141; THR-142; PHE-145; PRO-146; SER-147; THR-148; ILE-150; LYS-151; ILE-152; PHE-154; THR-155; LEU-157 AND HIS-308</scope>
</reference>
<reference key="22">
    <citation type="journal article" date="2015" name="J. Biol. Chem.">
        <title>BRCA1-associated protein 1 (BAP1) deubiquitinase antagonizes the ubiquitin-mediated activation of FoxK2 target genes.</title>
        <authorList>
            <person name="Okino Y."/>
            <person name="Machida Y."/>
            <person name="Frankland-Searby S."/>
            <person name="Machida Y.J."/>
        </authorList>
    </citation>
    <scope>FUNCTION</scope>
    <scope>INTERACTION WITH BAP1</scope>
</reference>
<reference key="23">
    <citation type="journal article" date="2017" name="Nat. Struct. Mol. Biol.">
        <title>Site-specific mapping of the human SUMO proteome reveals co-modification with phosphorylation.</title>
        <authorList>
            <person name="Hendriks I.A."/>
            <person name="Lyon D."/>
            <person name="Young C."/>
            <person name="Jensen L.J."/>
            <person name="Vertegaal A.C."/>
            <person name="Nielsen M.L."/>
        </authorList>
    </citation>
    <scope>SUMOYLATION [LARGE SCALE ANALYSIS] AT LYS-161; LYS-164; LYS-527 AND LYS-633</scope>
    <scope>IDENTIFICATION BY MASS SPECTROMETRY [LARGE SCALE ANALYSIS]</scope>
</reference>
<reference key="24">
    <citation type="journal article" date="2018" name="Oncogenesis">
        <title>SUMOylation modulates FOXK2-mediated paclitaxel sensitivity in breast cancer cells.</title>
        <authorList>
            <person name="Nestal de Moraes G."/>
            <person name="Ji Z."/>
            <person name="Fan L.Y."/>
            <person name="Yao S."/>
            <person name="Zona S."/>
            <person name="Sharrocks A.D."/>
            <person name="Lam E.W."/>
        </authorList>
    </citation>
    <scope>SUMOYLATION AT LYS-527 AND LYS-633</scope>
    <scope>MUTAGENESIS OF LYS-527 AND LYS-633</scope>
</reference>
<reference key="25">
    <citation type="journal article" date="2019" name="Nat. Commun.">
        <title>BAP1 complex promotes transcription by opposing PRC1-mediated H2A ubiquitylation.</title>
        <authorList>
            <person name="Campagne A."/>
            <person name="Lee M.K."/>
            <person name="Zielinski D."/>
            <person name="Michaud A."/>
            <person name="Le Corre S."/>
            <person name="Dingli F."/>
            <person name="Chen H."/>
            <person name="Shahidian L.Z."/>
            <person name="Vassilev I."/>
            <person name="Servant N."/>
            <person name="Loew D."/>
            <person name="Pasmant E."/>
            <person name="Postel-Vinay S."/>
            <person name="Wassef M."/>
            <person name="Margueron R."/>
        </authorList>
    </citation>
    <scope>FUNCTION</scope>
    <scope>IDENTIFICATION IN THE PR-DUB COMPLEX</scope>
    <scope>IDENTIFICATION BY MASS SPECTROMETRY</scope>
</reference>
<reference key="26">
    <citation type="journal article" date="2002" name="Proteins">
        <title>Solution structure of the DNA-binding domain of interleukin enhancer binding factor 1 (FOXK1a).</title>
        <authorList>
            <person name="Liu P.-P."/>
            <person name="Chen Y.-C."/>
            <person name="Li C."/>
            <person name="Hsieh Y.-H."/>
            <person name="Chen S.-W."/>
            <person name="Chen S.-H."/>
            <person name="Jeng W.-Y."/>
            <person name="Chuang W.-J."/>
        </authorList>
    </citation>
    <scope>STRUCTURE BY NMR OF 256-353 (ISOFORM 1)</scope>
    <scope>DNA-BINDING</scope>
</reference>
<reference key="27">
    <citation type="journal article" date="2006" name="J. Biol. Chem.">
        <title>Crystal structure of the human FOXK1a-DNA complex and its implications on the diverse binding specificity of winged helix/forkhead proteins.</title>
        <authorList>
            <person name="Tsai K.-L."/>
            <person name="Huang C.-Y."/>
            <person name="Chang C.-H."/>
            <person name="Sun Y.-J."/>
            <person name="Chuang W.-J."/>
            <person name="Hsiao C.-D."/>
        </authorList>
    </citation>
    <scope>X-RAY CRYSTALLOGRAPHY (2.40 ANGSTROMS) OF 256-353 (ISOFORM 1) IN COMPLEX WITH MAGNESIUM AND DUPLEX DNA</scope>
    <scope>DNA-BINDING</scope>
    <scope>DOMAIN</scope>
    <scope>MUTAGENESIS OF LYS-258; LYS-300; SER-305; ARG-307 AND LYS-328</scope>
</reference>
<name>FOXK2_HUMAN</name>
<accession>Q01167</accession>
<accession>A6NEP5</accession>
<accession>Q13622</accession>
<accession>Q13623</accession>
<accession>Q13624</accession>
<dbReference type="EMBL" id="X60787">
    <property type="protein sequence ID" value="CAA43200.1"/>
    <property type="molecule type" value="mRNA"/>
</dbReference>
<dbReference type="EMBL" id="U58196">
    <property type="protein sequence ID" value="AAB02820.1"/>
    <property type="status" value="ALT_SEQ"/>
    <property type="molecule type" value="mRNA"/>
</dbReference>
<dbReference type="EMBL" id="U58197">
    <property type="protein sequence ID" value="AAB02821.1"/>
    <property type="status" value="ALT_SEQ"/>
    <property type="molecule type" value="mRNA"/>
</dbReference>
<dbReference type="EMBL" id="U58198">
    <property type="protein sequence ID" value="AAB02822.1"/>
    <property type="status" value="ALT_SEQ"/>
    <property type="molecule type" value="mRNA"/>
</dbReference>
<dbReference type="EMBL" id="AC124287">
    <property type="status" value="NOT_ANNOTATED_CDS"/>
    <property type="molecule type" value="Genomic_DNA"/>
</dbReference>
<dbReference type="CCDS" id="CCDS11813.1">
    <molecule id="Q01167-1"/>
</dbReference>
<dbReference type="PIR" id="A41285">
    <property type="entry name" value="A41285"/>
</dbReference>
<dbReference type="RefSeq" id="NP_004505.2">
    <molecule id="Q01167-1"/>
    <property type="nucleotide sequence ID" value="NM_004514.3"/>
</dbReference>
<dbReference type="RefSeq" id="XP_047291875.1">
    <molecule id="Q01167-2"/>
    <property type="nucleotide sequence ID" value="XM_047435919.1"/>
</dbReference>
<dbReference type="RefSeq" id="XP_054171930.1">
    <molecule id="Q01167-2"/>
    <property type="nucleotide sequence ID" value="XM_054315955.1"/>
</dbReference>
<dbReference type="PDB" id="1JXS">
    <property type="method" value="NMR"/>
    <property type="chains" value="A=256-353"/>
</dbReference>
<dbReference type="PDB" id="2C6Y">
    <property type="method" value="X-ray"/>
    <property type="resolution" value="2.40 A"/>
    <property type="chains" value="A/B=256-353"/>
</dbReference>
<dbReference type="PDBsum" id="1JXS"/>
<dbReference type="PDBsum" id="2C6Y"/>
<dbReference type="BMRB" id="Q01167"/>
<dbReference type="SMR" id="Q01167"/>
<dbReference type="BioGRID" id="109820">
    <property type="interactions" value="249"/>
</dbReference>
<dbReference type="CORUM" id="Q01167"/>
<dbReference type="FunCoup" id="Q01167">
    <property type="interactions" value="4532"/>
</dbReference>
<dbReference type="IntAct" id="Q01167">
    <property type="interactions" value="180"/>
</dbReference>
<dbReference type="MINT" id="Q01167"/>
<dbReference type="STRING" id="9606.ENSP00000335677"/>
<dbReference type="GlyCosmos" id="Q01167">
    <property type="glycosylation" value="4 sites, 1 glycan"/>
</dbReference>
<dbReference type="GlyGen" id="Q01167">
    <property type="glycosylation" value="10 sites, 1 N-linked glycan (1 site), 1 O-linked glycan (9 sites)"/>
</dbReference>
<dbReference type="iPTMnet" id="Q01167"/>
<dbReference type="PhosphoSitePlus" id="Q01167"/>
<dbReference type="BioMuta" id="FOXK2"/>
<dbReference type="DMDM" id="118572648"/>
<dbReference type="jPOST" id="Q01167"/>
<dbReference type="MassIVE" id="Q01167"/>
<dbReference type="PaxDb" id="9606-ENSP00000335677"/>
<dbReference type="PeptideAtlas" id="Q01167"/>
<dbReference type="ProteomicsDB" id="57924">
    <molecule id="Q01167-1"/>
</dbReference>
<dbReference type="ProteomicsDB" id="57925">
    <molecule id="Q01167-2"/>
</dbReference>
<dbReference type="ProteomicsDB" id="57926">
    <molecule id="Q01167-3"/>
</dbReference>
<dbReference type="Pumba" id="Q01167"/>
<dbReference type="Antibodypedia" id="33026">
    <property type="antibodies" value="237 antibodies from 29 providers"/>
</dbReference>
<dbReference type="DNASU" id="3607"/>
<dbReference type="Ensembl" id="ENST00000335255.10">
    <molecule id="Q01167-1"/>
    <property type="protein sequence ID" value="ENSP00000335677.5"/>
    <property type="gene ID" value="ENSG00000141568.21"/>
</dbReference>
<dbReference type="Ensembl" id="ENST00000473637.6">
    <molecule id="Q01167-2"/>
    <property type="protein sequence ID" value="ENSP00000436108.2"/>
    <property type="gene ID" value="ENSG00000141568.21"/>
</dbReference>
<dbReference type="GeneID" id="3607"/>
<dbReference type="KEGG" id="hsa:3607"/>
<dbReference type="MANE-Select" id="ENST00000335255.10">
    <property type="protein sequence ID" value="ENSP00000335677.5"/>
    <property type="RefSeq nucleotide sequence ID" value="NM_004514.4"/>
    <property type="RefSeq protein sequence ID" value="NP_004505.2"/>
</dbReference>
<dbReference type="UCSC" id="uc002kfm.2">
    <molecule id="Q01167-1"/>
    <property type="organism name" value="human"/>
</dbReference>
<dbReference type="AGR" id="HGNC:6036"/>
<dbReference type="CTD" id="3607"/>
<dbReference type="DisGeNET" id="3607"/>
<dbReference type="GeneCards" id="FOXK2"/>
<dbReference type="HGNC" id="HGNC:6036">
    <property type="gene designation" value="FOXK2"/>
</dbReference>
<dbReference type="HPA" id="ENSG00000141568">
    <property type="expression patterns" value="Low tissue specificity"/>
</dbReference>
<dbReference type="MIM" id="147685">
    <property type="type" value="gene"/>
</dbReference>
<dbReference type="neXtProt" id="NX_Q01167"/>
<dbReference type="OpenTargets" id="ENSG00000141568"/>
<dbReference type="PharmGKB" id="PA29851"/>
<dbReference type="VEuPathDB" id="HostDB:ENSG00000141568"/>
<dbReference type="eggNOG" id="KOG2294">
    <property type="taxonomic scope" value="Eukaryota"/>
</dbReference>
<dbReference type="GeneTree" id="ENSGT00940000155709"/>
<dbReference type="HOGENOM" id="CLU_022344_0_0_1"/>
<dbReference type="InParanoid" id="Q01167"/>
<dbReference type="OMA" id="AMKPVTY"/>
<dbReference type="OrthoDB" id="691130at2759"/>
<dbReference type="PAN-GO" id="Q01167">
    <property type="GO annotations" value="3 GO annotations based on evolutionary models"/>
</dbReference>
<dbReference type="PhylomeDB" id="Q01167"/>
<dbReference type="TreeFam" id="TF325718"/>
<dbReference type="PathwayCommons" id="Q01167"/>
<dbReference type="Reactome" id="R-HSA-5689603">
    <property type="pathway name" value="UCH proteinases"/>
</dbReference>
<dbReference type="SignaLink" id="Q01167"/>
<dbReference type="SIGNOR" id="Q01167"/>
<dbReference type="BioGRID-ORCS" id="3607">
    <property type="hits" value="25 hits in 1176 CRISPR screens"/>
</dbReference>
<dbReference type="ChiTaRS" id="FOXK2">
    <property type="organism name" value="human"/>
</dbReference>
<dbReference type="EvolutionaryTrace" id="Q01167"/>
<dbReference type="GeneWiki" id="FOXK2"/>
<dbReference type="GenomeRNAi" id="3607"/>
<dbReference type="Pharos" id="Q01167">
    <property type="development level" value="Tbio"/>
</dbReference>
<dbReference type="PRO" id="PR:Q01167"/>
<dbReference type="Proteomes" id="UP000005640">
    <property type="component" value="Chromosome 17"/>
</dbReference>
<dbReference type="RNAct" id="Q01167">
    <property type="molecule type" value="protein"/>
</dbReference>
<dbReference type="Bgee" id="ENSG00000141568">
    <property type="expression patterns" value="Expressed in adrenal tissue and 200 other cell types or tissues"/>
</dbReference>
<dbReference type="ExpressionAtlas" id="Q01167">
    <property type="expression patterns" value="baseline and differential"/>
</dbReference>
<dbReference type="GO" id="GO:0000785">
    <property type="term" value="C:chromatin"/>
    <property type="evidence" value="ECO:0000247"/>
    <property type="project" value="NTNU_SB"/>
</dbReference>
<dbReference type="GO" id="GO:0043231">
    <property type="term" value="C:intracellular membrane-bounded organelle"/>
    <property type="evidence" value="ECO:0000314"/>
    <property type="project" value="HPA"/>
</dbReference>
<dbReference type="GO" id="GO:0005739">
    <property type="term" value="C:mitochondrion"/>
    <property type="evidence" value="ECO:0000314"/>
    <property type="project" value="HPA"/>
</dbReference>
<dbReference type="GO" id="GO:0005654">
    <property type="term" value="C:nucleoplasm"/>
    <property type="evidence" value="ECO:0000314"/>
    <property type="project" value="HPA"/>
</dbReference>
<dbReference type="GO" id="GO:0005634">
    <property type="term" value="C:nucleus"/>
    <property type="evidence" value="ECO:0000314"/>
    <property type="project" value="UniProtKB"/>
</dbReference>
<dbReference type="GO" id="GO:0001228">
    <property type="term" value="F:DNA-binding transcription activator activity, RNA polymerase II-specific"/>
    <property type="evidence" value="ECO:0000314"/>
    <property type="project" value="NTNU_SB"/>
</dbReference>
<dbReference type="GO" id="GO:0003700">
    <property type="term" value="F:DNA-binding transcription factor activity"/>
    <property type="evidence" value="ECO:0000250"/>
    <property type="project" value="UniProtKB"/>
</dbReference>
<dbReference type="GO" id="GO:0000981">
    <property type="term" value="F:DNA-binding transcription factor activity, RNA polymerase II-specific"/>
    <property type="evidence" value="ECO:0000247"/>
    <property type="project" value="NTNU_SB"/>
</dbReference>
<dbReference type="GO" id="GO:0001227">
    <property type="term" value="F:DNA-binding transcription repressor activity, RNA polymerase II-specific"/>
    <property type="evidence" value="ECO:0000250"/>
    <property type="project" value="UniProtKB"/>
</dbReference>
<dbReference type="GO" id="GO:0000287">
    <property type="term" value="F:magnesium ion binding"/>
    <property type="evidence" value="ECO:0000314"/>
    <property type="project" value="UniProtKB"/>
</dbReference>
<dbReference type="GO" id="GO:0000978">
    <property type="term" value="F:RNA polymerase II cis-regulatory region sequence-specific DNA binding"/>
    <property type="evidence" value="ECO:0000314"/>
    <property type="project" value="NTNU_SB"/>
</dbReference>
<dbReference type="GO" id="GO:0043565">
    <property type="term" value="F:sequence-specific DNA binding"/>
    <property type="evidence" value="ECO:0000314"/>
    <property type="project" value="UniProtKB"/>
</dbReference>
<dbReference type="GO" id="GO:0000976">
    <property type="term" value="F:transcription cis-regulatory region binding"/>
    <property type="evidence" value="ECO:0000314"/>
    <property type="project" value="UniProtKB"/>
</dbReference>
<dbReference type="GO" id="GO:0061621">
    <property type="term" value="P:canonical glycolysis"/>
    <property type="evidence" value="ECO:0000250"/>
    <property type="project" value="UniProtKB"/>
</dbReference>
<dbReference type="GO" id="GO:0001678">
    <property type="term" value="P:intracellular glucose homeostasis"/>
    <property type="evidence" value="ECO:0000250"/>
    <property type="project" value="UniProtKB"/>
</dbReference>
<dbReference type="GO" id="GO:0010507">
    <property type="term" value="P:negative regulation of autophagy"/>
    <property type="evidence" value="ECO:0000250"/>
    <property type="project" value="UniProtKB"/>
</dbReference>
<dbReference type="GO" id="GO:0045892">
    <property type="term" value="P:negative regulation of DNA-templated transcription"/>
    <property type="evidence" value="ECO:0000314"/>
    <property type="project" value="UniProtKB"/>
</dbReference>
<dbReference type="GO" id="GO:0045893">
    <property type="term" value="P:positive regulation of DNA-templated transcription"/>
    <property type="evidence" value="ECO:0000314"/>
    <property type="project" value="UniProtKB"/>
</dbReference>
<dbReference type="GO" id="GO:0045944">
    <property type="term" value="P:positive regulation of transcription by RNA polymerase II"/>
    <property type="evidence" value="ECO:0000314"/>
    <property type="project" value="NTNU_SB"/>
</dbReference>
<dbReference type="GO" id="GO:0006355">
    <property type="term" value="P:regulation of DNA-templated transcription"/>
    <property type="evidence" value="ECO:0000303"/>
    <property type="project" value="UniProtKB"/>
</dbReference>
<dbReference type="GO" id="GO:0010906">
    <property type="term" value="P:regulation of glucose metabolic process"/>
    <property type="evidence" value="ECO:0000250"/>
    <property type="project" value="UniProtKB"/>
</dbReference>
<dbReference type="GO" id="GO:0006357">
    <property type="term" value="P:regulation of transcription by RNA polymerase II"/>
    <property type="evidence" value="ECO:0000318"/>
    <property type="project" value="GO_Central"/>
</dbReference>
<dbReference type="GO" id="GO:0042594">
    <property type="term" value="P:response to starvation"/>
    <property type="evidence" value="ECO:0000250"/>
    <property type="project" value="UniProtKB"/>
</dbReference>
<dbReference type="CDD" id="cd20055">
    <property type="entry name" value="FH_FOXK2"/>
    <property type="match status" value="1"/>
</dbReference>
<dbReference type="CDD" id="cd22723">
    <property type="entry name" value="FHA_FOXK2"/>
    <property type="match status" value="1"/>
</dbReference>
<dbReference type="FunFam" id="1.10.10.10:FF:000030">
    <property type="entry name" value="Forkhead box protein K2"/>
    <property type="match status" value="1"/>
</dbReference>
<dbReference type="FunFam" id="2.60.200.20:FF:000025">
    <property type="entry name" value="Forkhead box protein K2"/>
    <property type="match status" value="1"/>
</dbReference>
<dbReference type="Gene3D" id="2.60.200.20">
    <property type="match status" value="1"/>
</dbReference>
<dbReference type="Gene3D" id="1.10.10.10">
    <property type="entry name" value="Winged helix-like DNA-binding domain superfamily/Winged helix DNA-binding domain"/>
    <property type="match status" value="1"/>
</dbReference>
<dbReference type="IDEAL" id="IID00065"/>
<dbReference type="InterPro" id="IPR047397">
    <property type="entry name" value="FH_FOXK2"/>
</dbReference>
<dbReference type="InterPro" id="IPR000253">
    <property type="entry name" value="FHA_dom"/>
</dbReference>
<dbReference type="InterPro" id="IPR047398">
    <property type="entry name" value="FHA_FOXK2"/>
</dbReference>
<dbReference type="InterPro" id="IPR001766">
    <property type="entry name" value="Fork_head_dom"/>
</dbReference>
<dbReference type="InterPro" id="IPR008984">
    <property type="entry name" value="SMAD_FHA_dom_sf"/>
</dbReference>
<dbReference type="InterPro" id="IPR018122">
    <property type="entry name" value="TF_fork_head_CS_1"/>
</dbReference>
<dbReference type="InterPro" id="IPR030456">
    <property type="entry name" value="TF_fork_head_CS_2"/>
</dbReference>
<dbReference type="InterPro" id="IPR036388">
    <property type="entry name" value="WH-like_DNA-bd_sf"/>
</dbReference>
<dbReference type="InterPro" id="IPR036390">
    <property type="entry name" value="WH_DNA-bd_sf"/>
</dbReference>
<dbReference type="PANTHER" id="PTHR45881">
    <property type="entry name" value="CHECKPOINT SUPPRESSOR 1-LIKE, ISOFORM A-RELATED"/>
    <property type="match status" value="1"/>
</dbReference>
<dbReference type="PANTHER" id="PTHR45881:SF3">
    <property type="entry name" value="FORKHEAD BOX PROTEIN K2"/>
    <property type="match status" value="1"/>
</dbReference>
<dbReference type="Pfam" id="PF00498">
    <property type="entry name" value="FHA"/>
    <property type="match status" value="1"/>
</dbReference>
<dbReference type="Pfam" id="PF00250">
    <property type="entry name" value="Forkhead"/>
    <property type="match status" value="1"/>
</dbReference>
<dbReference type="PRINTS" id="PR00053">
    <property type="entry name" value="FORKHEAD"/>
</dbReference>
<dbReference type="SMART" id="SM00339">
    <property type="entry name" value="FH"/>
    <property type="match status" value="1"/>
</dbReference>
<dbReference type="SMART" id="SM00240">
    <property type="entry name" value="FHA"/>
    <property type="match status" value="1"/>
</dbReference>
<dbReference type="SUPFAM" id="SSF49879">
    <property type="entry name" value="SMAD/FHA domain"/>
    <property type="match status" value="1"/>
</dbReference>
<dbReference type="SUPFAM" id="SSF46785">
    <property type="entry name" value="Winged helix' DNA-binding domain"/>
    <property type="match status" value="1"/>
</dbReference>
<dbReference type="PROSITE" id="PS50006">
    <property type="entry name" value="FHA_DOMAIN"/>
    <property type="match status" value="1"/>
</dbReference>
<dbReference type="PROSITE" id="PS00657">
    <property type="entry name" value="FORK_HEAD_1"/>
    <property type="match status" value="1"/>
</dbReference>
<dbReference type="PROSITE" id="PS00658">
    <property type="entry name" value="FORK_HEAD_2"/>
    <property type="match status" value="1"/>
</dbReference>
<dbReference type="PROSITE" id="PS50039">
    <property type="entry name" value="FORK_HEAD_3"/>
    <property type="match status" value="1"/>
</dbReference>
<sequence length="660" mass="69062">MAAAAAALSGAGTPPAGGGAGGGGAGGGGSPPGGWAVARLEGREFEYLMKKRSVTIGRNSSQGSVDVSMGHSSFISRRHLEIFTPPGGGGHGGAAPELPPAQPRPDAGGDFYLRCLGKNGVFVDGVFQRRGAPPLQLPRVCTFRFPSTNIKITFTALSSEKREKQEASESPVKAVQPHISPLTINIPDTMAHLISPLPSPTGTISAANSCPSSPRGAGSSGYKVGRVMPSDLNLMADNSQPENEKEASGGDSPKDDSKPPYSYAQLIVQAITMAPDKQLTLNGIYTHITKNYPYYRTADKGWQNSIRHNLSLNRYFIKVPRSQEEPGKGSFWRIDPASESKLIEQAFRKRRPRGVPCFRTPLGPLSSRSAPASPNHAGVLSAHSSGAQTPESLSREGSPAPLEPEPGAAQPKLAVIQEARFAQSAPGSPLSSQPVLITVQRQLPQAIKPVTYTVATPVTTSTSQPPVVQTVHVVHQIPAVSVTSVAGLAPANTYTVSGQAVVTPAAVLAPPKAEAQENGDHREVKVKVEPIPAIGHATLGTASRIIQTAQTTPVQTVTIVQQAPLGQHQLPIKTVTQNGTHVASVPTAVHGQVNNAAASPLHMLATHASASASLPTKRHNGDQPEQPELKRIKTEDGEGIVIALSVDTPPAAVREKGVQN</sequence>
<organism>
    <name type="scientific">Homo sapiens</name>
    <name type="common">Human</name>
    <dbReference type="NCBI Taxonomy" id="9606"/>
    <lineage>
        <taxon>Eukaryota</taxon>
        <taxon>Metazoa</taxon>
        <taxon>Chordata</taxon>
        <taxon>Craniata</taxon>
        <taxon>Vertebrata</taxon>
        <taxon>Euteleostomi</taxon>
        <taxon>Mammalia</taxon>
        <taxon>Eutheria</taxon>
        <taxon>Euarchontoglires</taxon>
        <taxon>Primates</taxon>
        <taxon>Haplorrhini</taxon>
        <taxon>Catarrhini</taxon>
        <taxon>Hominidae</taxon>
        <taxon>Homo</taxon>
    </lineage>
</organism>
<gene>
    <name type="primary">FOXK2</name>
    <name evidence="18 20" type="synonym">ILF</name>
    <name evidence="17" type="synonym">ILF1</name>
</gene>
<comment type="function">
    <text evidence="1 5 7 8 10 11 13 14 16">Transcriptional regulator involved in different processes such as glucose metabolism, aerobic glycolysis and autophagy (By similarity). Recognizes and binds the forkhead DNA sequence motif (5'-GTAAACA-3') and can both act as a transcription activator or repressor, depending on the context (PubMed:22083952, PubMed:25451922). Together with FOXK1, acts as a key regulator of metabolic reprogramming towards aerobic glycolysis, a process in which glucose is converted to lactate in the presence of oxygen (By similarity). Acts by promoting expression of enzymes for glycolysis (such as hexokinase-2 (HK2), phosphofructokinase, pyruvate kinase (PKLR) and lactate dehydrogenase), while suppressing further oxidation of pyruvate in the mitochondria by up-regulating pyruvate dehydrogenase kinases PDK1 and PDK4 (By similarity). Probably plays a role in gluconeogenesis during overnight fasting, when lactate from white adipose tissue and muscle is the main substrate (By similarity). Together with FOXK1, acts as a negative regulator of autophagy in skeletal muscle: in response to starvation, enters the nucleus, binds the promoters of autophagy genes and represses their expression, preventing proteolysis of skeletal muscle proteins (By similarity). In addition to the 5'-GTAAACA-3' DNA motif, also binds the 5'-TGANTCA-3' palindromic DNA motif, and co-associates with JUN/AP-1 to activate transcription (PubMed:22083952). Also able to bind to a minimal DNA heteroduplex containing a G/T-mismatch with 5'-TRT[G/T]NB-3' sequence (PubMed:20097901). Binds to NFAT-like motifs (purine-rich) in the IL2 promoter (PubMed:1339390). Positively regulates WNT/beta-catenin signaling by translocating DVL proteins into the nucleus (PubMed:25805136). Also binds to HIV-1 long terminal repeat. May be involved in both positive and negative regulation of important viral and cellular promoter elements (PubMed:1909027). Accessory component of the polycomb repressive deubiquitinase (PR-DUB) complex; recruits the PR-DUB complex to specific FOXK2-bound genes (PubMed:24634419, PubMed:30664650).</text>
</comment>
<comment type="subunit">
    <text evidence="1 11 12 13 14 16 23">Component of SIN3A-, but not SIN3B-, containing multiprotein complexes (By similarity). Interacts with DVL1, DVL2 (when phosphorylated) and DVL3; the interaction induces DVL2 nuclear translocation (PubMed:25805136). Interacts with SUDS3 (PubMed:25805136). Interacts with BAP1 (when phosphorylated); leading to recruit the PR-DUB complex and repress FOXK2 target genes (PubMed:24748658, PubMed:25451922). Accessory component of the polycomb repressive deubiquitinase (PR-DUB) complex, at least composed of BAP1, one of ASXL1, ASXL2 or (probably) ASXL3 and one of MBD5 or MBD6 (PubMed:24634419, PubMed:30664650). The PR-DUB core associates with a number of accessory proteins, including FOXK1, FOXK2, KDM1B, HCFC1 and OGT (Probable) (PubMed:30664650).</text>
</comment>
<comment type="interaction">
    <interactant intactId="EBI-2509991">
        <id>Q01167</id>
    </interactant>
    <interactant intactId="EBI-2866589">
        <id>P14316</id>
        <label>IRF2</label>
    </interactant>
    <organismsDiffer>false</organismsDiffer>
    <experiments>5</experiments>
</comment>
<comment type="interaction">
    <interactant intactId="EBI-2509991">
        <id>Q01167</id>
    </interactant>
    <interactant intactId="EBI-751711">
        <id>P61244</id>
        <label>MAX</label>
    </interactant>
    <organismsDiffer>false</organismsDiffer>
    <experiments>4</experiments>
</comment>
<comment type="subcellular location">
    <subcellularLocation>
        <location evidence="9 12 14">Nucleus</location>
    </subcellularLocation>
    <subcellularLocation>
        <location evidence="1">Cytoplasm</location>
    </subcellularLocation>
</comment>
<comment type="alternative products">
    <event type="alternative splicing"/>
    <isoform>
        <id>Q01167-1</id>
        <name>1</name>
        <sequence type="displayed"/>
    </isoform>
    <isoform>
        <id>Q01167-2</id>
        <name>2</name>
        <sequence type="described" ref="VSP_001559"/>
    </isoform>
    <isoform>
        <id>Q01167-3</id>
        <name>3</name>
        <sequence type="described" ref="VSP_001560 VSP_001561"/>
    </isoform>
</comment>
<comment type="tissue specificity">
    <text evidence="5">Expressed in both lymphoid and non-lymphoid cells.</text>
</comment>
<comment type="domain">
    <text evidence="6">The C-terminal part of the DNA-binding domain may contribute to DNA recognition specificity.</text>
</comment>
<comment type="PTM">
    <text evidence="9">Hyperphosphorylated during mitosis by CDK1 and, to a lower extent, CDK2 (PubMed:20810654). Phosphorylation at Ser-373 and Ser-428 affects stability by promoting degradation (PubMed:20810654).</text>
</comment>
<comment type="caution">
    <text evidence="17 19 22">Was initially named FOXK1a by some reports (PubMed:12402362, PubMed:16624804). It should not be confused with FOXK1 (AC P85037) paralog.</text>
</comment>
<comment type="sequence caution" evidence="22">
    <conflict type="miscellaneous discrepancy">
        <sequence resource="EMBL-CDS" id="AAB02820"/>
    </conflict>
    <text>The N-terminal sequence differs due to frameshifts and sequencing errors.</text>
</comment>
<comment type="sequence caution" evidence="22">
    <conflict type="miscellaneous discrepancy">
        <sequence resource="EMBL-CDS" id="AAB02821"/>
    </conflict>
    <text>The N-terminal sequence differs due to frameshifts and sequencing errors.</text>
</comment>
<comment type="sequence caution" evidence="22">
    <conflict type="miscellaneous discrepancy">
        <sequence resource="EMBL-CDS" id="AAB02822"/>
    </conflict>
    <text>The N-terminal sequence differs due to frameshifts and sequencing errors.</text>
</comment>
<protein>
    <recommendedName>
        <fullName evidence="22">Forkhead box protein K2</fullName>
    </recommendedName>
    <alternativeName>
        <fullName evidence="21">G/T-mismatch specific binding protein</fullName>
        <shortName evidence="21">nGTBP</shortName>
    </alternativeName>
    <alternativeName>
        <fullName evidence="17 20">Interleukin enhancer-binding factor 1</fullName>
    </alternativeName>
</protein>
<feature type="initiator methionine" description="Removed" evidence="26 28">
    <location>
        <position position="1"/>
    </location>
</feature>
<feature type="chain" id="PRO_0000091858" description="Forkhead box protein K2">
    <location>
        <begin position="2"/>
        <end position="660"/>
    </location>
</feature>
<feature type="domain" description="FHA" evidence="2">
    <location>
        <begin position="54"/>
        <end position="128"/>
    </location>
</feature>
<feature type="DNA-binding region" description="Fork-head" evidence="3">
    <location>
        <begin position="258"/>
        <end position="353"/>
    </location>
</feature>
<feature type="region of interest" description="Disordered" evidence="4">
    <location>
        <begin position="1"/>
        <end position="36"/>
    </location>
</feature>
<feature type="region of interest" description="Disordered" evidence="4">
    <location>
        <begin position="85"/>
        <end position="104"/>
    </location>
</feature>
<feature type="region of interest" description="Required for interaction with DVL2 and SUDS3" evidence="14">
    <location>
        <begin position="129"/>
        <end position="171"/>
    </location>
</feature>
<feature type="region of interest" description="Disordered" evidence="4">
    <location>
        <begin position="203"/>
        <end position="260"/>
    </location>
</feature>
<feature type="region of interest" description="DNA-binding; major groove" evidence="6">
    <location>
        <begin position="300"/>
        <end position="318"/>
    </location>
</feature>
<feature type="region of interest" description="DNA-binding; minor groove" evidence="6">
    <location>
        <begin position="328"/>
        <end position="332"/>
    </location>
</feature>
<feature type="region of interest" description="DNA-binding; minor groove" evidence="6">
    <location>
        <begin position="348"/>
        <end position="353"/>
    </location>
</feature>
<feature type="region of interest" description="Disordered" evidence="4">
    <location>
        <begin position="359"/>
        <end position="407"/>
    </location>
</feature>
<feature type="region of interest" description="Disordered" evidence="4">
    <location>
        <begin position="610"/>
        <end position="632"/>
    </location>
</feature>
<feature type="compositionally biased region" description="Low complexity" evidence="4">
    <location>
        <begin position="1"/>
        <end position="14"/>
    </location>
</feature>
<feature type="compositionally biased region" description="Gly residues" evidence="4">
    <location>
        <begin position="15"/>
        <end position="32"/>
    </location>
</feature>
<feature type="compositionally biased region" description="Polar residues" evidence="4">
    <location>
        <begin position="203"/>
        <end position="212"/>
    </location>
</feature>
<feature type="compositionally biased region" description="Basic and acidic residues" evidence="4">
    <location>
        <begin position="242"/>
        <end position="258"/>
    </location>
</feature>
<feature type="compositionally biased region" description="Polar residues" evidence="4">
    <location>
        <begin position="382"/>
        <end position="392"/>
    </location>
</feature>
<feature type="compositionally biased region" description="Basic and acidic residues" evidence="4">
    <location>
        <begin position="619"/>
        <end position="632"/>
    </location>
</feature>
<feature type="binding site" evidence="6">
    <location>
        <position position="310"/>
    </location>
    <ligand>
        <name>Mg(2+)</name>
        <dbReference type="ChEBI" id="CHEBI:18420"/>
    </ligand>
</feature>
<feature type="binding site" evidence="6">
    <location>
        <position position="311"/>
    </location>
    <ligand>
        <name>Mg(2+)</name>
        <dbReference type="ChEBI" id="CHEBI:18420"/>
    </ligand>
</feature>
<feature type="binding site" evidence="6">
    <location>
        <position position="313"/>
    </location>
    <ligand>
        <name>Mg(2+)</name>
        <dbReference type="ChEBI" id="CHEBI:18420"/>
    </ligand>
</feature>
<feature type="binding site" evidence="6">
    <location>
        <position position="316"/>
    </location>
    <ligand>
        <name>Mg(2+)</name>
        <dbReference type="ChEBI" id="CHEBI:18420"/>
    </ligand>
</feature>
<feature type="modified residue" description="N-acetylalanine" evidence="26 28">
    <location>
        <position position="2"/>
    </location>
</feature>
<feature type="modified residue" description="Phosphoserine" evidence="28">
    <location>
        <position position="30"/>
    </location>
</feature>
<feature type="modified residue" description="Omega-N-methylarginine" evidence="31">
    <location>
        <position position="144"/>
    </location>
</feature>
<feature type="modified residue" description="Phosphoserine" evidence="24 30">
    <location>
        <position position="239"/>
    </location>
</feature>
<feature type="modified residue" description="Phosphoserine; by CDK1 and CDK2" evidence="9">
    <location>
        <position position="373"/>
    </location>
</feature>
<feature type="modified residue" description="Phosphoserine" evidence="27 28 29 30 32">
    <location>
        <position position="398"/>
    </location>
</feature>
<feature type="modified residue" description="Phosphoserine" evidence="28 30">
    <location>
        <position position="424"/>
    </location>
</feature>
<feature type="modified residue" description="Phosphoserine; by CDK1 and CDK2" evidence="9 25 27 28 30">
    <location>
        <position position="428"/>
    </location>
</feature>
<feature type="modified residue" description="Phosphoserine" evidence="1">
    <location>
        <position position="599"/>
    </location>
</feature>
<feature type="cross-link" description="Glycyl lysine isopeptide (Lys-Gly) (interchain with G-Cter in SUMO2)" evidence="34">
    <location>
        <position position="161"/>
    </location>
</feature>
<feature type="cross-link" description="Glycyl lysine isopeptide (Lys-Gly) (interchain with G-Cter in SUMO2)" evidence="34">
    <location>
        <position position="164"/>
    </location>
</feature>
<feature type="cross-link" description="Glycyl lysine isopeptide (Lys-Gly) (interchain with G-Cter in SUMO2)" evidence="15 33 34">
    <location>
        <position position="527"/>
    </location>
</feature>
<feature type="cross-link" description="Glycyl lysine isopeptide (Lys-Gly) (interchain with G-Cter in SUMO2)" evidence="15 34">
    <location>
        <position position="633"/>
    </location>
</feature>
<feature type="splice variant" id="VSP_001560" description="In isoform 3." evidence="22">
    <original>NSIRHNLSLNRYFIKVPRSQEEPGK</original>
    <variation>RGESFAHVGNTRIRIGLPAHKAPQR</variation>
    <location>
        <begin position="304"/>
        <end position="328"/>
    </location>
</feature>
<feature type="splice variant" id="VSP_001561" description="In isoform 3." evidence="22">
    <location>
        <begin position="329"/>
        <end position="660"/>
    </location>
</feature>
<feature type="splice variant" id="VSP_001559" description="In isoform 2." evidence="18">
    <original>AAASPLHMLATHASASASLPTKRHNGDQPEQPELKRIKTEDGEGIVIALSVDTPPAAVREKGVQN</original>
    <variation>GPLGLRRPPCASSDWSCLS</variation>
    <location>
        <begin position="596"/>
        <end position="660"/>
    </location>
</feature>
<feature type="mutagenesis site" description="Reduced interaction with BAP1." evidence="12">
    <original>R</original>
    <variation>A</variation>
    <location>
        <position position="58"/>
    </location>
</feature>
<feature type="mutagenesis site" description="No effect on interaction with DVL2." evidence="14">
    <original>R</original>
    <variation>A</variation>
    <location>
        <position position="129"/>
    </location>
</feature>
<feature type="mutagenesis site" description="No effect on interaction with DVL2." evidence="14">
    <original>R</original>
    <variation>A</variation>
    <location>
        <position position="130"/>
    </location>
</feature>
<feature type="mutagenesis site" description="No effect on interaction with DVL2." evidence="14">
    <original>G</original>
    <variation>A</variation>
    <location>
        <position position="131"/>
    </location>
</feature>
<feature type="mutagenesis site" description="No effect on interaction with DVL2." evidence="14">
    <original>P</original>
    <variation>A</variation>
    <location>
        <position position="133"/>
    </location>
</feature>
<feature type="mutagenesis site" description="No effect on interaction with DVL2." evidence="14">
    <original>Q</original>
    <variation>A</variation>
    <location>
        <position position="136"/>
    </location>
</feature>
<feature type="mutagenesis site" description="Abolishes interaction with DVL2 and SUDS3 as well as DVL2 nuclear translocation." evidence="14">
    <original>L</original>
    <variation>A</variation>
    <location>
        <position position="137"/>
    </location>
</feature>
<feature type="mutagenesis site" description="No effect on interaction with DVL2." evidence="14">
    <original>P</original>
    <variation>A</variation>
    <location>
        <position position="138"/>
    </location>
</feature>
<feature type="mutagenesis site" description="No effect on interaction with DVL2." evidence="14">
    <original>C</original>
    <variation>A</variation>
    <location>
        <position position="141"/>
    </location>
</feature>
<feature type="mutagenesis site" description="No effect on interaction with DVL2." evidence="14">
    <original>T</original>
    <variation>A</variation>
    <location>
        <position position="142"/>
    </location>
</feature>
<feature type="mutagenesis site" description="Abolishes interaction with DVL2 and SUDS3 as well as DVL2 nuclear translocation." evidence="14">
    <original>F</original>
    <variation>A</variation>
    <location>
        <position position="145"/>
    </location>
</feature>
<feature type="mutagenesis site" description="Highly reduces interaction with DVL2." evidence="14">
    <original>P</original>
    <variation>A</variation>
    <location>
        <position position="146"/>
    </location>
</feature>
<feature type="mutagenesis site" description="No effect on interaction with DVL2." evidence="14">
    <original>S</original>
    <variation>A</variation>
    <location>
        <position position="147"/>
    </location>
</feature>
<feature type="mutagenesis site" description="No effect on interaction with DVL2." evidence="14">
    <original>T</original>
    <variation>A</variation>
    <location>
        <position position="148"/>
    </location>
</feature>
<feature type="mutagenesis site" description="No effect on interaction with DVL2." evidence="14">
    <original>I</original>
    <variation>A</variation>
    <location>
        <position position="150"/>
    </location>
</feature>
<feature type="mutagenesis site" description="No effect on interaction with DVL2." evidence="14">
    <original>K</original>
    <variation>A</variation>
    <location>
        <position position="151"/>
    </location>
</feature>
<feature type="mutagenesis site" description="No effect on interaction with DVL2." evidence="14">
    <original>I</original>
    <variation>A</variation>
    <location>
        <position position="152"/>
    </location>
</feature>
<feature type="mutagenesis site" description="Abolishes interaction with DVL2 and SUDS3 as well as DVL2 nuclear translocation." evidence="14">
    <original>F</original>
    <variation>A</variation>
    <location>
        <position position="154"/>
    </location>
</feature>
<feature type="mutagenesis site" description="No effect on interaction with DVL2." evidence="14">
    <original>T</original>
    <variation>A</variation>
    <location>
        <position position="155"/>
    </location>
</feature>
<feature type="mutagenesis site" description="No effect on interaction with DVL2." evidence="14">
    <original>L</original>
    <variation>A</variation>
    <location>
        <position position="157"/>
    </location>
</feature>
<feature type="mutagenesis site" description="Decreases DNA-binding to 40%." evidence="6">
    <original>K</original>
    <variation>A</variation>
    <location>
        <position position="258"/>
    </location>
</feature>
<feature type="mutagenesis site" description="Decreases DNA-binding to 20%." evidence="6">
    <original>K</original>
    <variation>A</variation>
    <location>
        <position position="300"/>
    </location>
</feature>
<feature type="mutagenesis site" description="Decreases DNA-binding to 70%." evidence="6">
    <original>S</original>
    <variation>A</variation>
    <location>
        <position position="305"/>
    </location>
</feature>
<feature type="mutagenesis site" description="Abolishes DNA-binding." evidence="6">
    <original>R</original>
    <variation>A</variation>
    <location>
        <position position="307"/>
    </location>
</feature>
<feature type="mutagenesis site" description="No effect on interaction with DVL2." evidence="14">
    <original>H</original>
    <variation>A</variation>
    <location>
        <position position="308"/>
    </location>
</feature>
<feature type="mutagenesis site" description="Decreases DNA-binding to 25%." evidence="6">
    <original>K</original>
    <variation>A</variation>
    <location>
        <position position="328"/>
    </location>
</feature>
<feature type="mutagenesis site" description="Decreased phosphorylation leading to increased stability of the protein; when associated with A-428." evidence="9">
    <original>S</original>
    <variation>A</variation>
    <location>
        <position position="373"/>
    </location>
</feature>
<feature type="mutagenesis site" description="Phosphomimetic mutant; decreased phosphorylation leading to decreased stability of the protein; when associated with D-428." evidence="9">
    <original>S</original>
    <variation>D</variation>
    <location>
        <position position="373"/>
    </location>
</feature>
<feature type="mutagenesis site" description="Decreased phosphorylation leading to increased stability of the protein; when associated with A-373." evidence="9">
    <original>S</original>
    <variation>A</variation>
    <location>
        <position position="428"/>
    </location>
</feature>
<feature type="mutagenesis site" description="Phosphomimetic mutant; decreased phosphorylation leading to decreased stability of the protein; when associated with D-373." evidence="9">
    <original>S</original>
    <variation>D</variation>
    <location>
        <position position="428"/>
    </location>
</feature>
<feature type="mutagenesis site" description="Abolished SUMOylation; when associated with R-633." evidence="15">
    <original>K</original>
    <variation>R</variation>
    <location>
        <position position="527"/>
    </location>
</feature>
<feature type="mutagenesis site" description="Abolished SUMOylation; when associated with R-527." evidence="15">
    <original>K</original>
    <variation>R</variation>
    <location>
        <position position="633"/>
    </location>
</feature>
<feature type="sequence conflict" description="In Ref. 1; CAA43200." evidence="22" ref="1">
    <original>AAAAALSGAGTPPAGGGAGGGGAGGGGSPPGGWAVARLEGREFEYLMKKRSVTIGRNSSQGSVDVSMGHSSFISRRHLEIFTPPGGGGHGGAAPELPPAQPRPDAGGDFYLRCLGKNG</original>
    <variation>Q</variation>
    <location>
        <begin position="3"/>
        <end position="120"/>
    </location>
</feature>
<feature type="helix" evidence="36">
    <location>
        <begin position="263"/>
        <end position="272"/>
    </location>
</feature>
<feature type="strand" evidence="35">
    <location>
        <begin position="277"/>
        <end position="279"/>
    </location>
</feature>
<feature type="helix" evidence="36">
    <location>
        <begin position="281"/>
        <end position="291"/>
    </location>
</feature>
<feature type="strand" evidence="35">
    <location>
        <begin position="295"/>
        <end position="298"/>
    </location>
</feature>
<feature type="helix" evidence="36">
    <location>
        <begin position="300"/>
        <end position="312"/>
    </location>
</feature>
<feature type="strand" evidence="36">
    <location>
        <begin position="316"/>
        <end position="319"/>
    </location>
</feature>
<feature type="strand" evidence="35">
    <location>
        <begin position="324"/>
        <end position="329"/>
    </location>
</feature>
<feature type="strand" evidence="36">
    <location>
        <begin position="331"/>
        <end position="334"/>
    </location>
</feature>
<feature type="helix" evidence="36">
    <location>
        <begin position="336"/>
        <end position="346"/>
    </location>
</feature>
<keyword id="KW-0002">3D-structure</keyword>
<keyword id="KW-0007">Acetylation</keyword>
<keyword id="KW-0010">Activator</keyword>
<keyword id="KW-0025">Alternative splicing</keyword>
<keyword id="KW-0963">Cytoplasm</keyword>
<keyword id="KW-0238">DNA-binding</keyword>
<keyword id="KW-1017">Isopeptide bond</keyword>
<keyword id="KW-0460">Magnesium</keyword>
<keyword id="KW-0479">Metal-binding</keyword>
<keyword id="KW-0488">Methylation</keyword>
<keyword id="KW-0539">Nucleus</keyword>
<keyword id="KW-0597">Phosphoprotein</keyword>
<keyword id="KW-1267">Proteomics identification</keyword>
<keyword id="KW-1185">Reference proteome</keyword>
<keyword id="KW-0678">Repressor</keyword>
<keyword id="KW-0804">Transcription</keyword>
<keyword id="KW-0805">Transcription regulation</keyword>
<keyword id="KW-0832">Ubl conjugation</keyword>
<keyword id="KW-0833">Ubl conjugation pathway</keyword>
<evidence type="ECO:0000250" key="1">
    <source>
        <dbReference type="UniProtKB" id="Q3UCQ1"/>
    </source>
</evidence>
<evidence type="ECO:0000255" key="2">
    <source>
        <dbReference type="PROSITE-ProRule" id="PRU00086"/>
    </source>
</evidence>
<evidence type="ECO:0000255" key="3">
    <source>
        <dbReference type="PROSITE-ProRule" id="PRU00089"/>
    </source>
</evidence>
<evidence type="ECO:0000256" key="4">
    <source>
        <dbReference type="SAM" id="MobiDB-lite"/>
    </source>
</evidence>
<evidence type="ECO:0000269" key="5">
    <source>
    </source>
</evidence>
<evidence type="ECO:0000269" key="6">
    <source>
    </source>
</evidence>
<evidence type="ECO:0000269" key="7">
    <source>
    </source>
</evidence>
<evidence type="ECO:0000269" key="8">
    <source>
    </source>
</evidence>
<evidence type="ECO:0000269" key="9">
    <source>
    </source>
</evidence>
<evidence type="ECO:0000269" key="10">
    <source>
    </source>
</evidence>
<evidence type="ECO:0000269" key="11">
    <source>
    </source>
</evidence>
<evidence type="ECO:0000269" key="12">
    <source>
    </source>
</evidence>
<evidence type="ECO:0000269" key="13">
    <source>
    </source>
</evidence>
<evidence type="ECO:0000269" key="14">
    <source>
    </source>
</evidence>
<evidence type="ECO:0000269" key="15">
    <source>
    </source>
</evidence>
<evidence type="ECO:0000269" key="16">
    <source>
    </source>
</evidence>
<evidence type="ECO:0000303" key="17">
    <source>
    </source>
</evidence>
<evidence type="ECO:0000303" key="18">
    <source>
    </source>
</evidence>
<evidence type="ECO:0000303" key="19">
    <source>
    </source>
</evidence>
<evidence type="ECO:0000303" key="20">
    <source>
    </source>
</evidence>
<evidence type="ECO:0000303" key="21">
    <source>
    </source>
</evidence>
<evidence type="ECO:0000305" key="22"/>
<evidence type="ECO:0000305" key="23">
    <source>
    </source>
</evidence>
<evidence type="ECO:0007744" key="24">
    <source>
    </source>
</evidence>
<evidence type="ECO:0007744" key="25">
    <source>
    </source>
</evidence>
<evidence type="ECO:0007744" key="26">
    <source>
    </source>
</evidence>
<evidence type="ECO:0007744" key="27">
    <source>
    </source>
</evidence>
<evidence type="ECO:0007744" key="28">
    <source>
    </source>
</evidence>
<evidence type="ECO:0007744" key="29">
    <source>
    </source>
</evidence>
<evidence type="ECO:0007744" key="30">
    <source>
    </source>
</evidence>
<evidence type="ECO:0007744" key="31">
    <source>
    </source>
</evidence>
<evidence type="ECO:0007744" key="32">
    <source>
    </source>
</evidence>
<evidence type="ECO:0007744" key="33">
    <source>
    </source>
</evidence>
<evidence type="ECO:0007744" key="34">
    <source>
    </source>
</evidence>
<evidence type="ECO:0007829" key="35">
    <source>
        <dbReference type="PDB" id="1JXS"/>
    </source>
</evidence>
<evidence type="ECO:0007829" key="36">
    <source>
        <dbReference type="PDB" id="2C6Y"/>
    </source>
</evidence>
<proteinExistence type="evidence at protein level"/>